<keyword id="KW-0963">Cytoplasm</keyword>
<keyword id="KW-0521">NADP</keyword>
<keyword id="KW-0560">Oxidoreductase</keyword>
<keyword id="KW-0671">Queuosine biosynthesis</keyword>
<keyword id="KW-1185">Reference proteome</keyword>
<organism>
    <name type="scientific">Shigella flexneri</name>
    <dbReference type="NCBI Taxonomy" id="623"/>
    <lineage>
        <taxon>Bacteria</taxon>
        <taxon>Pseudomonadati</taxon>
        <taxon>Pseudomonadota</taxon>
        <taxon>Gammaproteobacteria</taxon>
        <taxon>Enterobacterales</taxon>
        <taxon>Enterobacteriaceae</taxon>
        <taxon>Shigella</taxon>
    </lineage>
</organism>
<reference key="1">
    <citation type="journal article" date="2002" name="Nucleic Acids Res.">
        <title>Genome sequence of Shigella flexneri 2a: insights into pathogenicity through comparison with genomes of Escherichia coli K12 and O157.</title>
        <authorList>
            <person name="Jin Q."/>
            <person name="Yuan Z."/>
            <person name="Xu J."/>
            <person name="Wang Y."/>
            <person name="Shen Y."/>
            <person name="Lu W."/>
            <person name="Wang J."/>
            <person name="Liu H."/>
            <person name="Yang J."/>
            <person name="Yang F."/>
            <person name="Zhang X."/>
            <person name="Zhang J."/>
            <person name="Yang G."/>
            <person name="Wu H."/>
            <person name="Qu D."/>
            <person name="Dong J."/>
            <person name="Sun L."/>
            <person name="Xue Y."/>
            <person name="Zhao A."/>
            <person name="Gao Y."/>
            <person name="Zhu J."/>
            <person name="Kan B."/>
            <person name="Ding K."/>
            <person name="Chen S."/>
            <person name="Cheng H."/>
            <person name="Yao Z."/>
            <person name="He B."/>
            <person name="Chen R."/>
            <person name="Ma D."/>
            <person name="Qiang B."/>
            <person name="Wen Y."/>
            <person name="Hou Y."/>
            <person name="Yu J."/>
        </authorList>
    </citation>
    <scope>NUCLEOTIDE SEQUENCE [LARGE SCALE GENOMIC DNA]</scope>
    <source>
        <strain>301 / Serotype 2a</strain>
    </source>
</reference>
<reference key="2">
    <citation type="journal article" date="2003" name="Infect. Immun.">
        <title>Complete genome sequence and comparative genomics of Shigella flexneri serotype 2a strain 2457T.</title>
        <authorList>
            <person name="Wei J."/>
            <person name="Goldberg M.B."/>
            <person name="Burland V."/>
            <person name="Venkatesan M.M."/>
            <person name="Deng W."/>
            <person name="Fournier G."/>
            <person name="Mayhew G.F."/>
            <person name="Plunkett G. III"/>
            <person name="Rose D.J."/>
            <person name="Darling A."/>
            <person name="Mau B."/>
            <person name="Perna N.T."/>
            <person name="Payne S.M."/>
            <person name="Runyen-Janecky L.J."/>
            <person name="Zhou S."/>
            <person name="Schwartz D.C."/>
            <person name="Blattner F.R."/>
        </authorList>
    </citation>
    <scope>NUCLEOTIDE SEQUENCE [LARGE SCALE GENOMIC DNA]</scope>
    <source>
        <strain>ATCC 700930 / 2457T / Serotype 2a</strain>
    </source>
</reference>
<accession>Q83JW9</accession>
<accession>Q7C075</accession>
<evidence type="ECO:0000255" key="1">
    <source>
        <dbReference type="HAMAP-Rule" id="MF_00817"/>
    </source>
</evidence>
<protein>
    <recommendedName>
        <fullName evidence="1">NADPH-dependent 7-cyano-7-deazaguanine reductase</fullName>
        <ecNumber evidence="1">1.7.1.13</ecNumber>
    </recommendedName>
    <alternativeName>
        <fullName evidence="1">7-cyano-7-carbaguanine reductase</fullName>
    </alternativeName>
    <alternativeName>
        <fullName evidence="1">NADPH-dependent nitrile oxidoreductase</fullName>
    </alternativeName>
    <alternativeName>
        <fullName evidence="1">PreQ(0) reductase</fullName>
    </alternativeName>
</protein>
<sequence length="282" mass="32571">MSSYANHQALAGLTLGKSTDYRDTYDASLLQGVPRSLNRDPLGLKADNLPFHGTDIWTLYELSWLNAKGLPQVAVGHVELDYTSVNLIESKSFKLYLNSFNQTRFNNWDEVRQTLERDLSTCAQGKISVALYRLDELEGQPIGHFNGTCIDDQDITIDNYEFTTDYLENATSGEKVVEETLVSHLLKSNCLITHQPDWGSIQIQYRGRQIDREKLLRYLVSFRHHNEFHEQCVERIFNDLLRFCQPEKLSVYARYTRRGGLDINPWRSNSDFVPSTTRLVRQ</sequence>
<dbReference type="EC" id="1.7.1.13" evidence="1"/>
<dbReference type="EMBL" id="AE005674">
    <property type="protein sequence ID" value="AAN44295.1"/>
    <property type="molecule type" value="Genomic_DNA"/>
</dbReference>
<dbReference type="EMBL" id="AE014073">
    <property type="protein sequence ID" value="AAP18120.1"/>
    <property type="molecule type" value="Genomic_DNA"/>
</dbReference>
<dbReference type="RefSeq" id="NP_708588.1">
    <property type="nucleotide sequence ID" value="NC_004337.2"/>
</dbReference>
<dbReference type="RefSeq" id="WP_000100422.1">
    <property type="nucleotide sequence ID" value="NZ_WHSI01000060.1"/>
</dbReference>
<dbReference type="SMR" id="Q83JW9"/>
<dbReference type="STRING" id="198214.SF2807"/>
<dbReference type="PaxDb" id="198214-SF2807"/>
<dbReference type="GeneID" id="1025777"/>
<dbReference type="KEGG" id="sfl:SF2807"/>
<dbReference type="KEGG" id="sfx:S3002"/>
<dbReference type="PATRIC" id="fig|198214.7.peg.3341"/>
<dbReference type="HOGENOM" id="CLU_054738_0_0_6"/>
<dbReference type="UniPathway" id="UPA00392"/>
<dbReference type="Proteomes" id="UP000001006">
    <property type="component" value="Chromosome"/>
</dbReference>
<dbReference type="Proteomes" id="UP000002673">
    <property type="component" value="Chromosome"/>
</dbReference>
<dbReference type="GO" id="GO:0005737">
    <property type="term" value="C:cytoplasm"/>
    <property type="evidence" value="ECO:0007669"/>
    <property type="project" value="UniProtKB-SubCell"/>
</dbReference>
<dbReference type="GO" id="GO:0033739">
    <property type="term" value="F:preQ1 synthase activity"/>
    <property type="evidence" value="ECO:0007669"/>
    <property type="project" value="UniProtKB-UniRule"/>
</dbReference>
<dbReference type="GO" id="GO:0008616">
    <property type="term" value="P:queuosine biosynthetic process"/>
    <property type="evidence" value="ECO:0007669"/>
    <property type="project" value="UniProtKB-UniRule"/>
</dbReference>
<dbReference type="GO" id="GO:0006400">
    <property type="term" value="P:tRNA modification"/>
    <property type="evidence" value="ECO:0007669"/>
    <property type="project" value="UniProtKB-UniRule"/>
</dbReference>
<dbReference type="FunFam" id="3.30.1130.10:FF:000004">
    <property type="entry name" value="NADPH-dependent 7-cyano-7-deazaguanine reductase"/>
    <property type="match status" value="1"/>
</dbReference>
<dbReference type="FunFam" id="3.30.1130.10:FF:000006">
    <property type="entry name" value="NADPH-dependent 7-cyano-7-deazaguanine reductase"/>
    <property type="match status" value="1"/>
</dbReference>
<dbReference type="Gene3D" id="3.30.1130.10">
    <property type="match status" value="2"/>
</dbReference>
<dbReference type="HAMAP" id="MF_00817">
    <property type="entry name" value="QueF_type2"/>
    <property type="match status" value="1"/>
</dbReference>
<dbReference type="InterPro" id="IPR043133">
    <property type="entry name" value="GTP-CH-I_C/QueF"/>
</dbReference>
<dbReference type="InterPro" id="IPR050084">
    <property type="entry name" value="NADPH_dep_7-cyano-7-deazaG_red"/>
</dbReference>
<dbReference type="InterPro" id="IPR029500">
    <property type="entry name" value="QueF"/>
</dbReference>
<dbReference type="InterPro" id="IPR029139">
    <property type="entry name" value="QueF_N"/>
</dbReference>
<dbReference type="InterPro" id="IPR016428">
    <property type="entry name" value="QueF_type2"/>
</dbReference>
<dbReference type="NCBIfam" id="TIGR03138">
    <property type="entry name" value="QueF"/>
    <property type="match status" value="1"/>
</dbReference>
<dbReference type="PANTHER" id="PTHR34354">
    <property type="entry name" value="NADPH-DEPENDENT 7-CYANO-7-DEAZAGUANINE REDUCTASE"/>
    <property type="match status" value="1"/>
</dbReference>
<dbReference type="PANTHER" id="PTHR34354:SF1">
    <property type="entry name" value="NADPH-DEPENDENT 7-CYANO-7-DEAZAGUANINE REDUCTASE"/>
    <property type="match status" value="1"/>
</dbReference>
<dbReference type="Pfam" id="PF14489">
    <property type="entry name" value="QueF"/>
    <property type="match status" value="1"/>
</dbReference>
<dbReference type="Pfam" id="PF14819">
    <property type="entry name" value="QueF_N"/>
    <property type="match status" value="1"/>
</dbReference>
<dbReference type="PIRSF" id="PIRSF004750">
    <property type="entry name" value="Nitrile_oxidored_YqcD_prd"/>
    <property type="match status" value="1"/>
</dbReference>
<dbReference type="SUPFAM" id="SSF55620">
    <property type="entry name" value="Tetrahydrobiopterin biosynthesis enzymes-like"/>
    <property type="match status" value="1"/>
</dbReference>
<name>QUEF_SHIFL</name>
<comment type="function">
    <text evidence="1">Catalyzes the NADPH-dependent reduction of 7-cyano-7-deazaguanine (preQ0) to 7-aminomethyl-7-deazaguanine (preQ1).</text>
</comment>
<comment type="catalytic activity">
    <reaction evidence="1">
        <text>7-aminomethyl-7-carbaguanine + 2 NADP(+) = 7-cyano-7-deazaguanine + 2 NADPH + 3 H(+)</text>
        <dbReference type="Rhea" id="RHEA:13409"/>
        <dbReference type="ChEBI" id="CHEBI:15378"/>
        <dbReference type="ChEBI" id="CHEBI:45075"/>
        <dbReference type="ChEBI" id="CHEBI:57783"/>
        <dbReference type="ChEBI" id="CHEBI:58349"/>
        <dbReference type="ChEBI" id="CHEBI:58703"/>
        <dbReference type="EC" id="1.7.1.13"/>
    </reaction>
</comment>
<comment type="pathway">
    <text evidence="1">tRNA modification; tRNA-queuosine biosynthesis.</text>
</comment>
<comment type="subunit">
    <text evidence="1">Homodimer.</text>
</comment>
<comment type="subcellular location">
    <subcellularLocation>
        <location evidence="1">Cytoplasm</location>
    </subcellularLocation>
</comment>
<comment type="similarity">
    <text evidence="1">Belongs to the GTP cyclohydrolase I family. QueF type 2 subfamily.</text>
</comment>
<proteinExistence type="inferred from homology"/>
<feature type="chain" id="PRO_0000163061" description="NADPH-dependent 7-cyano-7-deazaguanine reductase">
    <location>
        <begin position="1"/>
        <end position="282"/>
    </location>
</feature>
<feature type="active site" description="Thioimide intermediate" evidence="1">
    <location>
        <position position="190"/>
    </location>
</feature>
<feature type="active site" description="Proton donor" evidence="1">
    <location>
        <position position="197"/>
    </location>
</feature>
<feature type="binding site" evidence="1">
    <location>
        <begin position="88"/>
        <end position="90"/>
    </location>
    <ligand>
        <name>substrate</name>
    </ligand>
</feature>
<feature type="binding site" evidence="1">
    <location>
        <begin position="90"/>
        <end position="91"/>
    </location>
    <ligand>
        <name>NADPH</name>
        <dbReference type="ChEBI" id="CHEBI:57783"/>
    </ligand>
</feature>
<feature type="binding site" evidence="1">
    <location>
        <begin position="229"/>
        <end position="230"/>
    </location>
    <ligand>
        <name>substrate</name>
    </ligand>
</feature>
<feature type="binding site" evidence="1">
    <location>
        <begin position="258"/>
        <end position="259"/>
    </location>
    <ligand>
        <name>NADPH</name>
        <dbReference type="ChEBI" id="CHEBI:57783"/>
    </ligand>
</feature>
<gene>
    <name evidence="1" type="primary">queF</name>
    <name type="ordered locus">SF2807</name>
    <name type="ordered locus">S3002</name>
</gene>